<name>APT_CROS5</name>
<organism>
    <name type="scientific">Crocosphaera subtropica (strain ATCC 51142 / BH68)</name>
    <name type="common">Cyanothece sp. (strain ATCC 51142)</name>
    <dbReference type="NCBI Taxonomy" id="43989"/>
    <lineage>
        <taxon>Bacteria</taxon>
        <taxon>Bacillati</taxon>
        <taxon>Cyanobacteriota</taxon>
        <taxon>Cyanophyceae</taxon>
        <taxon>Oscillatoriophycideae</taxon>
        <taxon>Chroococcales</taxon>
        <taxon>Aphanothecaceae</taxon>
        <taxon>Crocosphaera</taxon>
        <taxon>Crocosphaera subtropica</taxon>
    </lineage>
</organism>
<proteinExistence type="inferred from homology"/>
<reference key="1">
    <citation type="journal article" date="2008" name="Proc. Natl. Acad. Sci. U.S.A.">
        <title>The genome of Cyanothece 51142, a unicellular diazotrophic cyanobacterium important in the marine nitrogen cycle.</title>
        <authorList>
            <person name="Welsh E.A."/>
            <person name="Liberton M."/>
            <person name="Stoeckel J."/>
            <person name="Loh T."/>
            <person name="Elvitigala T."/>
            <person name="Wang C."/>
            <person name="Wollam A."/>
            <person name="Fulton R.S."/>
            <person name="Clifton S.W."/>
            <person name="Jacobs J.M."/>
            <person name="Aurora R."/>
            <person name="Ghosh B.K."/>
            <person name="Sherman L.A."/>
            <person name="Smith R.D."/>
            <person name="Wilson R.K."/>
            <person name="Pakrasi H.B."/>
        </authorList>
    </citation>
    <scope>NUCLEOTIDE SEQUENCE [LARGE SCALE GENOMIC DNA]</scope>
    <source>
        <strain>ATCC 51142 / BH68</strain>
    </source>
</reference>
<sequence>MDLKGLIRDIPNFPKPGIVFRDITTLLSDAEGLRYTIDTLTEKCKAANLSPDYIVGMESRGFLFGVPLAYQLNAGFVPVRKPGKLPAAVHQVEYELEYGTDSLEIHQDALNNHHNVLIVDDLMATGGTAKATADLLEKIGCNVLGFAFIIELKALEGRKKLPNLPIISLVDY</sequence>
<comment type="function">
    <text evidence="1">Catalyzes a salvage reaction resulting in the formation of AMP, that is energically less costly than de novo synthesis.</text>
</comment>
<comment type="catalytic activity">
    <reaction evidence="1">
        <text>AMP + diphosphate = 5-phospho-alpha-D-ribose 1-diphosphate + adenine</text>
        <dbReference type="Rhea" id="RHEA:16609"/>
        <dbReference type="ChEBI" id="CHEBI:16708"/>
        <dbReference type="ChEBI" id="CHEBI:33019"/>
        <dbReference type="ChEBI" id="CHEBI:58017"/>
        <dbReference type="ChEBI" id="CHEBI:456215"/>
        <dbReference type="EC" id="2.4.2.7"/>
    </reaction>
</comment>
<comment type="pathway">
    <text evidence="1">Purine metabolism; AMP biosynthesis via salvage pathway; AMP from adenine: step 1/1.</text>
</comment>
<comment type="subunit">
    <text evidence="1">Homodimer.</text>
</comment>
<comment type="subcellular location">
    <subcellularLocation>
        <location evidence="1">Cytoplasm</location>
    </subcellularLocation>
</comment>
<comment type="similarity">
    <text evidence="1">Belongs to the purine/pyrimidine phosphoribosyltransferase family.</text>
</comment>
<feature type="chain" id="PRO_1000088967" description="Adenine phosphoribosyltransferase">
    <location>
        <begin position="1"/>
        <end position="172"/>
    </location>
</feature>
<dbReference type="EC" id="2.4.2.7" evidence="1"/>
<dbReference type="EMBL" id="CP000806">
    <property type="protein sequence ID" value="ACB51648.1"/>
    <property type="molecule type" value="Genomic_DNA"/>
</dbReference>
<dbReference type="RefSeq" id="WP_009545002.1">
    <property type="nucleotide sequence ID" value="NC_010546.1"/>
</dbReference>
<dbReference type="SMR" id="B1WQD7"/>
<dbReference type="STRING" id="43989.cce_2298"/>
<dbReference type="KEGG" id="cyt:cce_2298"/>
<dbReference type="eggNOG" id="COG0503">
    <property type="taxonomic scope" value="Bacteria"/>
</dbReference>
<dbReference type="HOGENOM" id="CLU_063339_3_0_3"/>
<dbReference type="OrthoDB" id="9803963at2"/>
<dbReference type="UniPathway" id="UPA00588">
    <property type="reaction ID" value="UER00646"/>
</dbReference>
<dbReference type="Proteomes" id="UP000001203">
    <property type="component" value="Chromosome circular"/>
</dbReference>
<dbReference type="GO" id="GO:0005737">
    <property type="term" value="C:cytoplasm"/>
    <property type="evidence" value="ECO:0007669"/>
    <property type="project" value="UniProtKB-SubCell"/>
</dbReference>
<dbReference type="GO" id="GO:0002055">
    <property type="term" value="F:adenine binding"/>
    <property type="evidence" value="ECO:0007669"/>
    <property type="project" value="TreeGrafter"/>
</dbReference>
<dbReference type="GO" id="GO:0003999">
    <property type="term" value="F:adenine phosphoribosyltransferase activity"/>
    <property type="evidence" value="ECO:0007669"/>
    <property type="project" value="UniProtKB-UniRule"/>
</dbReference>
<dbReference type="GO" id="GO:0016208">
    <property type="term" value="F:AMP binding"/>
    <property type="evidence" value="ECO:0007669"/>
    <property type="project" value="TreeGrafter"/>
</dbReference>
<dbReference type="GO" id="GO:0006168">
    <property type="term" value="P:adenine salvage"/>
    <property type="evidence" value="ECO:0007669"/>
    <property type="project" value="InterPro"/>
</dbReference>
<dbReference type="GO" id="GO:0044209">
    <property type="term" value="P:AMP salvage"/>
    <property type="evidence" value="ECO:0007669"/>
    <property type="project" value="UniProtKB-UniRule"/>
</dbReference>
<dbReference type="GO" id="GO:0006166">
    <property type="term" value="P:purine ribonucleoside salvage"/>
    <property type="evidence" value="ECO:0007669"/>
    <property type="project" value="UniProtKB-KW"/>
</dbReference>
<dbReference type="CDD" id="cd06223">
    <property type="entry name" value="PRTases_typeI"/>
    <property type="match status" value="1"/>
</dbReference>
<dbReference type="FunFam" id="3.40.50.2020:FF:000004">
    <property type="entry name" value="Adenine phosphoribosyltransferase"/>
    <property type="match status" value="1"/>
</dbReference>
<dbReference type="Gene3D" id="3.40.50.2020">
    <property type="match status" value="1"/>
</dbReference>
<dbReference type="HAMAP" id="MF_00004">
    <property type="entry name" value="Aden_phosphoribosyltr"/>
    <property type="match status" value="1"/>
</dbReference>
<dbReference type="InterPro" id="IPR005764">
    <property type="entry name" value="Ade_phspho_trans"/>
</dbReference>
<dbReference type="InterPro" id="IPR000836">
    <property type="entry name" value="PRibTrfase_dom"/>
</dbReference>
<dbReference type="InterPro" id="IPR029057">
    <property type="entry name" value="PRTase-like"/>
</dbReference>
<dbReference type="InterPro" id="IPR050054">
    <property type="entry name" value="UPRTase/APRTase"/>
</dbReference>
<dbReference type="NCBIfam" id="TIGR01090">
    <property type="entry name" value="apt"/>
    <property type="match status" value="1"/>
</dbReference>
<dbReference type="NCBIfam" id="NF002634">
    <property type="entry name" value="PRK02304.1-3"/>
    <property type="match status" value="1"/>
</dbReference>
<dbReference type="NCBIfam" id="NF002636">
    <property type="entry name" value="PRK02304.1-5"/>
    <property type="match status" value="1"/>
</dbReference>
<dbReference type="PANTHER" id="PTHR32315">
    <property type="entry name" value="ADENINE PHOSPHORIBOSYLTRANSFERASE"/>
    <property type="match status" value="1"/>
</dbReference>
<dbReference type="PANTHER" id="PTHR32315:SF3">
    <property type="entry name" value="ADENINE PHOSPHORIBOSYLTRANSFERASE"/>
    <property type="match status" value="1"/>
</dbReference>
<dbReference type="Pfam" id="PF00156">
    <property type="entry name" value="Pribosyltran"/>
    <property type="match status" value="1"/>
</dbReference>
<dbReference type="SUPFAM" id="SSF53271">
    <property type="entry name" value="PRTase-like"/>
    <property type="match status" value="1"/>
</dbReference>
<dbReference type="PROSITE" id="PS00103">
    <property type="entry name" value="PUR_PYR_PR_TRANSFER"/>
    <property type="match status" value="1"/>
</dbReference>
<protein>
    <recommendedName>
        <fullName evidence="1">Adenine phosphoribosyltransferase</fullName>
        <shortName evidence="1">APRT</shortName>
        <ecNumber evidence="1">2.4.2.7</ecNumber>
    </recommendedName>
</protein>
<evidence type="ECO:0000255" key="1">
    <source>
        <dbReference type="HAMAP-Rule" id="MF_00004"/>
    </source>
</evidence>
<accession>B1WQD7</accession>
<keyword id="KW-0963">Cytoplasm</keyword>
<keyword id="KW-0328">Glycosyltransferase</keyword>
<keyword id="KW-0660">Purine salvage</keyword>
<keyword id="KW-1185">Reference proteome</keyword>
<keyword id="KW-0808">Transferase</keyword>
<gene>
    <name evidence="1" type="primary">apt</name>
    <name type="ordered locus">cce_2298</name>
</gene>